<dbReference type="EMBL" id="AJ719813">
    <property type="protein sequence ID" value="CAG31472.1"/>
    <property type="molecule type" value="mRNA"/>
</dbReference>
<dbReference type="RefSeq" id="NP_001006583.1">
    <property type="nucleotide sequence ID" value="NM_001006583.2"/>
</dbReference>
<dbReference type="SMR" id="Q5ZLC1"/>
<dbReference type="FunCoup" id="Q5ZLC1">
    <property type="interactions" value="436"/>
</dbReference>
<dbReference type="STRING" id="9031.ENSGALP00000025009"/>
<dbReference type="PaxDb" id="9031-ENSGALP00000025009"/>
<dbReference type="Ensembl" id="ENSGALT00010013389.1">
    <property type="protein sequence ID" value="ENSGALP00010007938.1"/>
    <property type="gene ID" value="ENSGALG00010005594.1"/>
</dbReference>
<dbReference type="GeneID" id="427307"/>
<dbReference type="KEGG" id="gga:427307"/>
<dbReference type="CTD" id="54534"/>
<dbReference type="VEuPathDB" id="HostDB:geneid_427307"/>
<dbReference type="eggNOG" id="ENOG502S27V">
    <property type="taxonomic scope" value="Eukaryota"/>
</dbReference>
<dbReference type="GeneTree" id="ENSGT00390000004279"/>
<dbReference type="InParanoid" id="Q5ZLC1"/>
<dbReference type="OMA" id="LMCSAQD"/>
<dbReference type="OrthoDB" id="9939609at2759"/>
<dbReference type="PhylomeDB" id="Q5ZLC1"/>
<dbReference type="PRO" id="PR:Q5ZLC1"/>
<dbReference type="Proteomes" id="UP000000539">
    <property type="component" value="Chromosome Z"/>
</dbReference>
<dbReference type="GO" id="GO:0005829">
    <property type="term" value="C:cytosol"/>
    <property type="evidence" value="ECO:0007669"/>
    <property type="project" value="Ensembl"/>
</dbReference>
<dbReference type="GO" id="GO:0005762">
    <property type="term" value="C:mitochondrial large ribosomal subunit"/>
    <property type="evidence" value="ECO:0000250"/>
    <property type="project" value="UniProtKB"/>
</dbReference>
<dbReference type="InterPro" id="IPR018305">
    <property type="entry name" value="Ribosomal_m50"/>
</dbReference>
<dbReference type="PANTHER" id="PTHR31542">
    <property type="entry name" value="39A RIBOSOMAL PROTEIN L50, MITOCHONDRIAL"/>
    <property type="match status" value="1"/>
</dbReference>
<dbReference type="PANTHER" id="PTHR31542:SF1">
    <property type="entry name" value="LARGE RIBOSOMAL SUBUNIT PROTEIN ML50"/>
    <property type="match status" value="1"/>
</dbReference>
<dbReference type="Pfam" id="PF10501">
    <property type="entry name" value="Ribosomal_L50"/>
    <property type="match status" value="1"/>
</dbReference>
<accession>Q5ZLC1</accession>
<comment type="subunit">
    <text evidence="1">Component of the mitochondrial ribosome large subunit (39S) which comprises a 16S rRNA and about 50 distinct proteins.</text>
</comment>
<comment type="subcellular location">
    <subcellularLocation>
        <location evidence="1">Mitochondrion</location>
    </subcellularLocation>
</comment>
<comment type="similarity">
    <text evidence="3">Belongs to the mitochondrion-specific ribosomal protein mL50 family.</text>
</comment>
<protein>
    <recommendedName>
        <fullName evidence="3">Large ribosomal subunit protein mL50</fullName>
    </recommendedName>
    <alternativeName>
        <fullName>39S ribosomal protein L50, mitochondrial</fullName>
        <shortName>L50mt</shortName>
        <shortName>MRP-L50</shortName>
    </alternativeName>
</protein>
<sequence>MAAAIGLRVVGRRLGLGLGRTPRRALWGGHSKKEEKEVEENSIIPQEKKEPSLICPPPRSRKYVPPENIQSILEARVKEICGPSLAGNWLQTSLKDNRLKYQLLAQLAAELGHAVPNSQLHLMCSAQDVLTFYSTPVKDMLKFDELCAAELPPNLKIAWER</sequence>
<organism>
    <name type="scientific">Gallus gallus</name>
    <name type="common">Chicken</name>
    <dbReference type="NCBI Taxonomy" id="9031"/>
    <lineage>
        <taxon>Eukaryota</taxon>
        <taxon>Metazoa</taxon>
        <taxon>Chordata</taxon>
        <taxon>Craniata</taxon>
        <taxon>Vertebrata</taxon>
        <taxon>Euteleostomi</taxon>
        <taxon>Archelosauria</taxon>
        <taxon>Archosauria</taxon>
        <taxon>Dinosauria</taxon>
        <taxon>Saurischia</taxon>
        <taxon>Theropoda</taxon>
        <taxon>Coelurosauria</taxon>
        <taxon>Aves</taxon>
        <taxon>Neognathae</taxon>
        <taxon>Galloanserae</taxon>
        <taxon>Galliformes</taxon>
        <taxon>Phasianidae</taxon>
        <taxon>Phasianinae</taxon>
        <taxon>Gallus</taxon>
    </lineage>
</organism>
<reference key="1">
    <citation type="journal article" date="2005" name="Genome Biol.">
        <title>Full-length cDNAs from chicken bursal lymphocytes to facilitate gene function analysis.</title>
        <authorList>
            <person name="Caldwell R.B."/>
            <person name="Kierzek A.M."/>
            <person name="Arakawa H."/>
            <person name="Bezzubov Y."/>
            <person name="Zaim J."/>
            <person name="Fiedler P."/>
            <person name="Kutter S."/>
            <person name="Blagodatski A."/>
            <person name="Kostovska D."/>
            <person name="Koter M."/>
            <person name="Plachy J."/>
            <person name="Carninci P."/>
            <person name="Hayashizaki Y."/>
            <person name="Buerstedde J.-M."/>
        </authorList>
    </citation>
    <scope>NUCLEOTIDE SEQUENCE [LARGE SCALE MRNA]</scope>
    <source>
        <strain>CB</strain>
        <tissue>Bursa of Fabricius</tissue>
    </source>
</reference>
<feature type="chain" id="PRO_0000261662" description="Large ribosomal subunit protein mL50">
    <location>
        <begin position="1"/>
        <end position="161"/>
    </location>
</feature>
<feature type="region of interest" description="Disordered" evidence="2">
    <location>
        <begin position="27"/>
        <end position="51"/>
    </location>
</feature>
<proteinExistence type="evidence at transcript level"/>
<keyword id="KW-0496">Mitochondrion</keyword>
<keyword id="KW-1185">Reference proteome</keyword>
<keyword id="KW-0687">Ribonucleoprotein</keyword>
<keyword id="KW-0689">Ribosomal protein</keyword>
<name>RM50_CHICK</name>
<gene>
    <name type="primary">MRPL50</name>
    <name type="ORF">RCJMB04_6m16</name>
</gene>
<evidence type="ECO:0000250" key="1">
    <source>
        <dbReference type="UniProtKB" id="Q8N5N7"/>
    </source>
</evidence>
<evidence type="ECO:0000256" key="2">
    <source>
        <dbReference type="SAM" id="MobiDB-lite"/>
    </source>
</evidence>
<evidence type="ECO:0000305" key="3"/>